<reference key="1">
    <citation type="journal article" date="2003" name="Science">
        <title>A genomic view of the human-Bacteroides thetaiotaomicron symbiosis.</title>
        <authorList>
            <person name="Xu J."/>
            <person name="Bjursell M.K."/>
            <person name="Himrod J."/>
            <person name="Deng S."/>
            <person name="Carmichael L.K."/>
            <person name="Chiang H.C."/>
            <person name="Hooper L.V."/>
            <person name="Gordon J.I."/>
        </authorList>
    </citation>
    <scope>NUCLEOTIDE SEQUENCE [LARGE SCALE GENOMIC DNA]</scope>
    <source>
        <strain>ATCC 29148 / DSM 2079 / JCM 5827 / CCUG 10774 / NCTC 10582 / VPI-5482 / E50</strain>
    </source>
</reference>
<accession>Q8A7G0</accession>
<name>QUEF_BACTN</name>
<comment type="function">
    <text evidence="1">Catalyzes the NADPH-dependent reduction of 7-cyano-7-deazaguanine (preQ0) to 7-aminomethyl-7-deazaguanine (preQ1).</text>
</comment>
<comment type="catalytic activity">
    <reaction evidence="1">
        <text>7-aminomethyl-7-carbaguanine + 2 NADP(+) = 7-cyano-7-deazaguanine + 2 NADPH + 3 H(+)</text>
        <dbReference type="Rhea" id="RHEA:13409"/>
        <dbReference type="ChEBI" id="CHEBI:15378"/>
        <dbReference type="ChEBI" id="CHEBI:45075"/>
        <dbReference type="ChEBI" id="CHEBI:57783"/>
        <dbReference type="ChEBI" id="CHEBI:58349"/>
        <dbReference type="ChEBI" id="CHEBI:58703"/>
        <dbReference type="EC" id="1.7.1.13"/>
    </reaction>
</comment>
<comment type="pathway">
    <text evidence="1">tRNA modification; tRNA-queuosine biosynthesis.</text>
</comment>
<comment type="subcellular location">
    <subcellularLocation>
        <location evidence="1">Cytoplasm</location>
    </subcellularLocation>
</comment>
<comment type="similarity">
    <text evidence="1">Belongs to the GTP cyclohydrolase I family. QueF type 1 subfamily.</text>
</comment>
<dbReference type="EC" id="1.7.1.13" evidence="1"/>
<dbReference type="EMBL" id="AE015928">
    <property type="protein sequence ID" value="AAO76671.1"/>
    <property type="molecule type" value="Genomic_DNA"/>
</dbReference>
<dbReference type="RefSeq" id="NP_810477.1">
    <property type="nucleotide sequence ID" value="NC_004663.1"/>
</dbReference>
<dbReference type="RefSeq" id="WP_008762202.1">
    <property type="nucleotide sequence ID" value="NZ_UYXG01000006.1"/>
</dbReference>
<dbReference type="SMR" id="Q8A7G0"/>
<dbReference type="STRING" id="226186.BT_1564"/>
<dbReference type="PaxDb" id="226186-BT_1564"/>
<dbReference type="EnsemblBacteria" id="AAO76671">
    <property type="protein sequence ID" value="AAO76671"/>
    <property type="gene ID" value="BT_1564"/>
</dbReference>
<dbReference type="GeneID" id="60927546"/>
<dbReference type="KEGG" id="bth:BT_1564"/>
<dbReference type="PATRIC" id="fig|226186.12.peg.1599"/>
<dbReference type="eggNOG" id="COG0780">
    <property type="taxonomic scope" value="Bacteria"/>
</dbReference>
<dbReference type="HOGENOM" id="CLU_102489_0_1_10"/>
<dbReference type="InParanoid" id="Q8A7G0"/>
<dbReference type="OrthoDB" id="9795077at2"/>
<dbReference type="UniPathway" id="UPA00392"/>
<dbReference type="Proteomes" id="UP000001414">
    <property type="component" value="Chromosome"/>
</dbReference>
<dbReference type="GO" id="GO:0005829">
    <property type="term" value="C:cytosol"/>
    <property type="evidence" value="ECO:0000318"/>
    <property type="project" value="GO_Central"/>
</dbReference>
<dbReference type="GO" id="GO:0033739">
    <property type="term" value="F:preQ1 synthase activity"/>
    <property type="evidence" value="ECO:0000318"/>
    <property type="project" value="GO_Central"/>
</dbReference>
<dbReference type="GO" id="GO:0008616">
    <property type="term" value="P:queuosine biosynthetic process"/>
    <property type="evidence" value="ECO:0000318"/>
    <property type="project" value="GO_Central"/>
</dbReference>
<dbReference type="GO" id="GO:0006400">
    <property type="term" value="P:tRNA modification"/>
    <property type="evidence" value="ECO:0007669"/>
    <property type="project" value="UniProtKB-UniRule"/>
</dbReference>
<dbReference type="Gene3D" id="3.30.1130.10">
    <property type="match status" value="1"/>
</dbReference>
<dbReference type="HAMAP" id="MF_00818">
    <property type="entry name" value="QueF_type1"/>
    <property type="match status" value="1"/>
</dbReference>
<dbReference type="InterPro" id="IPR043133">
    <property type="entry name" value="GTP-CH-I_C/QueF"/>
</dbReference>
<dbReference type="InterPro" id="IPR050084">
    <property type="entry name" value="NADPH_dep_7-cyano-7-deazaG_red"/>
</dbReference>
<dbReference type="InterPro" id="IPR029500">
    <property type="entry name" value="QueF"/>
</dbReference>
<dbReference type="InterPro" id="IPR016856">
    <property type="entry name" value="QueF_type1"/>
</dbReference>
<dbReference type="NCBIfam" id="TIGR03139">
    <property type="entry name" value="QueF-II"/>
    <property type="match status" value="1"/>
</dbReference>
<dbReference type="PANTHER" id="PTHR34354">
    <property type="entry name" value="NADPH-DEPENDENT 7-CYANO-7-DEAZAGUANINE REDUCTASE"/>
    <property type="match status" value="1"/>
</dbReference>
<dbReference type="PANTHER" id="PTHR34354:SF1">
    <property type="entry name" value="NADPH-DEPENDENT 7-CYANO-7-DEAZAGUANINE REDUCTASE"/>
    <property type="match status" value="1"/>
</dbReference>
<dbReference type="Pfam" id="PF14489">
    <property type="entry name" value="QueF"/>
    <property type="match status" value="1"/>
</dbReference>
<dbReference type="PIRSF" id="PIRSF027377">
    <property type="entry name" value="Nitrile_oxidored_QueF"/>
    <property type="match status" value="1"/>
</dbReference>
<dbReference type="SUPFAM" id="SSF55620">
    <property type="entry name" value="Tetrahydrobiopterin biosynthesis enzymes-like"/>
    <property type="match status" value="1"/>
</dbReference>
<keyword id="KW-0963">Cytoplasm</keyword>
<keyword id="KW-0521">NADP</keyword>
<keyword id="KW-0560">Oxidoreductase</keyword>
<keyword id="KW-0671">Queuosine biosynthesis</keyword>
<keyword id="KW-1185">Reference proteome</keyword>
<evidence type="ECO:0000255" key="1">
    <source>
        <dbReference type="HAMAP-Rule" id="MF_00818"/>
    </source>
</evidence>
<proteinExistence type="inferred from homology"/>
<feature type="chain" id="PRO_0000162961" description="NADPH-dependent 7-cyano-7-deazaguanine reductase">
    <location>
        <begin position="1"/>
        <end position="151"/>
    </location>
</feature>
<feature type="active site" description="Thioimide intermediate" evidence="1">
    <location>
        <position position="51"/>
    </location>
</feature>
<feature type="active site" description="Proton donor" evidence="1">
    <location>
        <position position="58"/>
    </location>
</feature>
<feature type="binding site" evidence="1">
    <location>
        <begin position="73"/>
        <end position="75"/>
    </location>
    <ligand>
        <name>substrate</name>
    </ligand>
</feature>
<feature type="binding site" evidence="1">
    <location>
        <begin position="92"/>
        <end position="93"/>
    </location>
    <ligand>
        <name>substrate</name>
    </ligand>
</feature>
<sequence length="151" mass="17679">MAELKDQLSLLGRKTEYKQDYAPEVLEAFDNKHPENDYWVRFNCPEFTSLCPITGQPDFAEIRISYIPDIKMVESKSLKLYLFSFRNHGAFHEDCVNIIMKDLIKLMNPKYIEVTGIFTPRGGISIYPYANYGRPGTKFEQMAEHRLMNRE</sequence>
<organism>
    <name type="scientific">Bacteroides thetaiotaomicron (strain ATCC 29148 / DSM 2079 / JCM 5827 / CCUG 10774 / NCTC 10582 / VPI-5482 / E50)</name>
    <dbReference type="NCBI Taxonomy" id="226186"/>
    <lineage>
        <taxon>Bacteria</taxon>
        <taxon>Pseudomonadati</taxon>
        <taxon>Bacteroidota</taxon>
        <taxon>Bacteroidia</taxon>
        <taxon>Bacteroidales</taxon>
        <taxon>Bacteroidaceae</taxon>
        <taxon>Bacteroides</taxon>
    </lineage>
</organism>
<protein>
    <recommendedName>
        <fullName evidence="1">NADPH-dependent 7-cyano-7-deazaguanine reductase</fullName>
        <ecNumber evidence="1">1.7.1.13</ecNumber>
    </recommendedName>
    <alternativeName>
        <fullName evidence="1">7-cyano-7-carbaguanine reductase</fullName>
    </alternativeName>
    <alternativeName>
        <fullName evidence="1">NADPH-dependent nitrile oxidoreductase</fullName>
    </alternativeName>
    <alternativeName>
        <fullName evidence="1">PreQ(0) reductase</fullName>
    </alternativeName>
</protein>
<gene>
    <name evidence="1" type="primary">queF</name>
    <name type="ordered locus">BT_1564</name>
</gene>